<proteinExistence type="inferred from homology"/>
<dbReference type="EC" id="2.7.7.1" evidence="1"/>
<dbReference type="EMBL" id="BA000011">
    <property type="protein sequence ID" value="BAB60001.1"/>
    <property type="status" value="ALT_INIT"/>
    <property type="molecule type" value="Genomic_DNA"/>
</dbReference>
<dbReference type="RefSeq" id="WP_010917103.1">
    <property type="nucleotide sequence ID" value="NC_002689.2"/>
</dbReference>
<dbReference type="SMR" id="Q97AF1"/>
<dbReference type="STRING" id="273116.gene:9381651"/>
<dbReference type="PaxDb" id="273116-14325076"/>
<dbReference type="GeneID" id="1441951"/>
<dbReference type="KEGG" id="tvo:TVG0879099"/>
<dbReference type="eggNOG" id="arCOG00972">
    <property type="taxonomic scope" value="Archaea"/>
</dbReference>
<dbReference type="HOGENOM" id="CLU_108783_0_0_2"/>
<dbReference type="OrthoDB" id="264480at2157"/>
<dbReference type="PhylomeDB" id="Q97AF1"/>
<dbReference type="UniPathway" id="UPA00253">
    <property type="reaction ID" value="UER00600"/>
</dbReference>
<dbReference type="Proteomes" id="UP000001017">
    <property type="component" value="Chromosome"/>
</dbReference>
<dbReference type="GO" id="GO:0005737">
    <property type="term" value="C:cytoplasm"/>
    <property type="evidence" value="ECO:0007669"/>
    <property type="project" value="UniProtKB-SubCell"/>
</dbReference>
<dbReference type="GO" id="GO:0005524">
    <property type="term" value="F:ATP binding"/>
    <property type="evidence" value="ECO:0007669"/>
    <property type="project" value="UniProtKB-KW"/>
</dbReference>
<dbReference type="GO" id="GO:0000309">
    <property type="term" value="F:nicotinamide-nucleotide adenylyltransferase activity"/>
    <property type="evidence" value="ECO:0007669"/>
    <property type="project" value="UniProtKB-UniRule"/>
</dbReference>
<dbReference type="GO" id="GO:0009435">
    <property type="term" value="P:NAD biosynthetic process"/>
    <property type="evidence" value="ECO:0007669"/>
    <property type="project" value="UniProtKB-UniRule"/>
</dbReference>
<dbReference type="CDD" id="cd02166">
    <property type="entry name" value="NMNAT_Archaea"/>
    <property type="match status" value="1"/>
</dbReference>
<dbReference type="Gene3D" id="3.40.50.620">
    <property type="entry name" value="HUPs"/>
    <property type="match status" value="1"/>
</dbReference>
<dbReference type="HAMAP" id="MF_00243">
    <property type="entry name" value="NMN_adenylyltr"/>
    <property type="match status" value="1"/>
</dbReference>
<dbReference type="InterPro" id="IPR004821">
    <property type="entry name" value="Cyt_trans-like"/>
</dbReference>
<dbReference type="InterPro" id="IPR006418">
    <property type="entry name" value="NMN_Atrans_arc"/>
</dbReference>
<dbReference type="InterPro" id="IPR014729">
    <property type="entry name" value="Rossmann-like_a/b/a_fold"/>
</dbReference>
<dbReference type="NCBIfam" id="TIGR01527">
    <property type="entry name" value="arch_NMN_Atrans"/>
    <property type="match status" value="1"/>
</dbReference>
<dbReference type="NCBIfam" id="TIGR00125">
    <property type="entry name" value="cyt_tran_rel"/>
    <property type="match status" value="1"/>
</dbReference>
<dbReference type="NCBIfam" id="NF002243">
    <property type="entry name" value="PRK01153.1"/>
    <property type="match status" value="1"/>
</dbReference>
<dbReference type="PANTHER" id="PTHR21342:SF0">
    <property type="entry name" value="BIFUNCTIONAL NMN ADENYLYLTRANSFERASE_NUDIX HYDROLASE"/>
    <property type="match status" value="1"/>
</dbReference>
<dbReference type="PANTHER" id="PTHR21342">
    <property type="entry name" value="PHOSPHOPANTETHEINE ADENYLYLTRANSFERASE"/>
    <property type="match status" value="1"/>
</dbReference>
<dbReference type="Pfam" id="PF01467">
    <property type="entry name" value="CTP_transf_like"/>
    <property type="match status" value="1"/>
</dbReference>
<dbReference type="SUPFAM" id="SSF52374">
    <property type="entry name" value="Nucleotidylyl transferase"/>
    <property type="match status" value="1"/>
</dbReference>
<feature type="chain" id="PRO_0000135008" description="Nicotinamide-nucleotide adenylyltransferase">
    <location>
        <begin position="1"/>
        <end position="178"/>
    </location>
</feature>
<gene>
    <name type="ordered locus">TV0859</name>
    <name type="ORF">TVG0879099</name>
</gene>
<comment type="catalytic activity">
    <reaction evidence="1">
        <text>beta-nicotinamide D-ribonucleotide + ATP + H(+) = diphosphate + NAD(+)</text>
        <dbReference type="Rhea" id="RHEA:21360"/>
        <dbReference type="ChEBI" id="CHEBI:14649"/>
        <dbReference type="ChEBI" id="CHEBI:15378"/>
        <dbReference type="ChEBI" id="CHEBI:30616"/>
        <dbReference type="ChEBI" id="CHEBI:33019"/>
        <dbReference type="ChEBI" id="CHEBI:57540"/>
        <dbReference type="EC" id="2.7.7.1"/>
    </reaction>
</comment>
<comment type="pathway">
    <text evidence="1">Cofactor biosynthesis; NAD(+) biosynthesis; NAD(+) from nicotinamide D-ribonucleotide: step 1/1.</text>
</comment>
<comment type="subcellular location">
    <subcellularLocation>
        <location evidence="1">Cytoplasm</location>
    </subcellularLocation>
</comment>
<comment type="similarity">
    <text evidence="1">Belongs to the archaeal NMN adenylyltransferase family.</text>
</comment>
<comment type="sequence caution" evidence="2">
    <conflict type="erroneous initiation">
        <sequence resource="EMBL-CDS" id="BAB60001"/>
    </conflict>
</comment>
<protein>
    <recommendedName>
        <fullName evidence="1">Nicotinamide-nucleotide adenylyltransferase</fullName>
        <ecNumber evidence="1">2.7.7.1</ecNumber>
    </recommendedName>
    <alternativeName>
        <fullName evidence="1">NAD(+) diphosphorylase</fullName>
    </alternativeName>
    <alternativeName>
        <fullName evidence="1">NAD(+) pyrophosphorylase</fullName>
    </alternativeName>
    <alternativeName>
        <fullName evidence="1">NMN adenylyltransferase</fullName>
    </alternativeName>
</protein>
<reference key="1">
    <citation type="journal article" date="2000" name="Proc. Natl. Acad. Sci. U.S.A.">
        <title>Archaeal adaptation to higher temperatures revealed by genomic sequence of Thermoplasma volcanium.</title>
        <authorList>
            <person name="Kawashima T."/>
            <person name="Amano N."/>
            <person name="Koike H."/>
            <person name="Makino S."/>
            <person name="Higuchi S."/>
            <person name="Kawashima-Ohya Y."/>
            <person name="Watanabe K."/>
            <person name="Yamazaki M."/>
            <person name="Kanehori K."/>
            <person name="Kawamoto T."/>
            <person name="Nunoshiba T."/>
            <person name="Yamamoto Y."/>
            <person name="Aramaki H."/>
            <person name="Makino K."/>
            <person name="Suzuki M."/>
        </authorList>
    </citation>
    <scope>NUCLEOTIDE SEQUENCE [LARGE SCALE GENOMIC DNA]</scope>
    <source>
        <strain>ATCC 51530 / DSM 4299 / JCM 9571 / NBRC 15438 / GSS1</strain>
    </source>
</reference>
<sequence>MQSTKEHRAFLIGRFQPFHLGHLEIVKRILRENDSIIIGIGSAQYSHTTVNPFTAGERHLMISRTLEREHVYNYYLVPIEDVNANSLWVSHVEALAPKFDVVYTNNPLVRRLFTEKHYEVRSLPMVNRSEWTGTKIREKMIKGENWEQNVPEPVVEVIREIDGISRIRQLSTTDEDVP</sequence>
<accession>Q97AF1</accession>
<organism>
    <name type="scientific">Thermoplasma volcanium (strain ATCC 51530 / DSM 4299 / JCM 9571 / NBRC 15438 / GSS1)</name>
    <dbReference type="NCBI Taxonomy" id="273116"/>
    <lineage>
        <taxon>Archaea</taxon>
        <taxon>Methanobacteriati</taxon>
        <taxon>Thermoplasmatota</taxon>
        <taxon>Thermoplasmata</taxon>
        <taxon>Thermoplasmatales</taxon>
        <taxon>Thermoplasmataceae</taxon>
        <taxon>Thermoplasma</taxon>
    </lineage>
</organism>
<keyword id="KW-0067">ATP-binding</keyword>
<keyword id="KW-0963">Cytoplasm</keyword>
<keyword id="KW-0520">NAD</keyword>
<keyword id="KW-0547">Nucleotide-binding</keyword>
<keyword id="KW-0548">Nucleotidyltransferase</keyword>
<keyword id="KW-0662">Pyridine nucleotide biosynthesis</keyword>
<keyword id="KW-0808">Transferase</keyword>
<name>NADM_THEVO</name>
<evidence type="ECO:0000255" key="1">
    <source>
        <dbReference type="HAMAP-Rule" id="MF_00243"/>
    </source>
</evidence>
<evidence type="ECO:0000305" key="2"/>